<keyword id="KW-0066">ATP synthesis</keyword>
<keyword id="KW-0138">CF(0)</keyword>
<keyword id="KW-0375">Hydrogen ion transport</keyword>
<keyword id="KW-0406">Ion transport</keyword>
<keyword id="KW-0472">Membrane</keyword>
<keyword id="KW-0496">Mitochondrion</keyword>
<keyword id="KW-0999">Mitochondrion inner membrane</keyword>
<keyword id="KW-1185">Reference proteome</keyword>
<keyword id="KW-0812">Transmembrane</keyword>
<keyword id="KW-1133">Transmembrane helix</keyword>
<keyword id="KW-0813">Transport</keyword>
<proteinExistence type="evidence at transcript level"/>
<comment type="function">
    <text evidence="1">Subunit a, of the mitochondrial membrane ATP synthase complex (F(1)F(0) ATP synthase or Complex V) that produces ATP from ADP in the presence of a proton gradient across the membrane which is generated by electron transport complexes of the respiratory chain. ATP synthase complex consist of a soluble F(1) head domain - the catalytic core - and a membrane F(1) domain - the membrane proton channel. These two domains are linked by a central stalk rotating inside the F(1) region and a stationary peripheral stalk. During catalysis, ATP synthesis in the catalytic domain of F(1) is coupled via a rotary mechanism of the central stalk subunits to proton translocation. With the subunit c (ATP5MC1), forms the proton-conducting channel in the F(0) domain, that contains two crucial half-channels (inlet and outlet) that facilitate proton movement from the mitochondrial intermembrane space (IMS) into the matrix. Protons are taken up via the inlet half-channel and released through the outlet half-channel, following a Grotthuss mechanism.</text>
</comment>
<comment type="catalytic activity">
    <reaction evidence="1">
        <text>H(+)(in) = H(+)(out)</text>
        <dbReference type="Rhea" id="RHEA:34979"/>
        <dbReference type="ChEBI" id="CHEBI:15378"/>
    </reaction>
</comment>
<comment type="subunit">
    <text evidence="1">Component of the ATP synthase complex composed at least of ATP5F1A/subunit alpha, ATP5F1B/subunit beta, ATP5MC1/subunit c (homooctomer), MT-ATP6/subunit a, MT-ATP8/subunit 8, ATP5ME/subunit e, ATP5MF/subunit f, ATP5MG/subunit g, ATP5MK/subunit k, ATP5MJ/subunit j, ATP5F1C/subunit gamma, ATP5F1D/subunit delta, ATP5F1E/subunit epsilon, ATP5PF/subunit F6, ATP5PB/subunit b, ATP5PD/subunit d, ATP5PO/subunit OSCP. ATP synthase complex consists of a soluble F(1) head domain (subunits alpha(3) and beta(3)) - the catalytic core - and a membrane F(0) domain - the membrane proton channel (subunits c, a, 8, e, f, g, k and j). These two domains are linked by a central stalk (subunits gamma, delta, and epsilon) rotating inside the F1 region and a stationary peripheral stalk (subunits F6, b, d, and OSCP). Interacts with DNAJC30; interaction is direct.</text>
</comment>
<comment type="subcellular location">
    <subcellularLocation>
        <location>Mitochondrion inner membrane</location>
        <topology>Multi-pass membrane protein</topology>
    </subcellularLocation>
</comment>
<comment type="similarity">
    <text evidence="3">Belongs to the ATPase A chain family.</text>
</comment>
<evidence type="ECO:0000250" key="1">
    <source>
        <dbReference type="UniProtKB" id="P00846"/>
    </source>
</evidence>
<evidence type="ECO:0000255" key="2"/>
<evidence type="ECO:0000305" key="3"/>
<feature type="chain" id="PRO_0000250496" description="ATP synthase F(0) complex subunit a">
    <location>
        <begin position="1"/>
        <end position="226"/>
    </location>
</feature>
<feature type="transmembrane region" description="Helical" evidence="2">
    <location>
        <begin position="6"/>
        <end position="26"/>
    </location>
</feature>
<feature type="transmembrane region" description="Helical" evidence="2">
    <location>
        <begin position="68"/>
        <end position="88"/>
    </location>
</feature>
<feature type="transmembrane region" description="Helical" evidence="2">
    <location>
        <begin position="97"/>
        <end position="117"/>
    </location>
</feature>
<feature type="transmembrane region" description="Helical" evidence="2">
    <location>
        <begin position="138"/>
        <end position="158"/>
    </location>
</feature>
<feature type="transmembrane region" description="Helical" evidence="2">
    <location>
        <begin position="164"/>
        <end position="184"/>
    </location>
</feature>
<feature type="transmembrane region" description="Helical" evidence="2">
    <location>
        <begin position="189"/>
        <end position="209"/>
    </location>
</feature>
<gene>
    <name evidence="1" type="primary">MT-ATP6</name>
    <name type="synonym">ATP6</name>
    <name type="synonym">ATPASE6</name>
    <name type="synonym">MTATP6</name>
</gene>
<geneLocation type="mitochondrion"/>
<accession>Q94UY0</accession>
<sequence length="226" mass="24966">MNENLFASFITPTLMGLPIVLLIIMFPNLLFPSPTRLMNNRLVSFQQWLIQLVLKQMMAMHNPKGRTWSLMLISLIMFIGSTNLLGLLPHSFTPTTQLSMNLGMAIPLWAGAVITGFRHKTKASLAHFLPQGTPIPLIPMLIIIETISLFIQPMALAVRLTANITAGHLLMHLIGGATLVLTSISPPTAILTFIILVLLTMLEFAVALIQAYVFTLLVSLYLHDNT</sequence>
<name>ATP6_ICTTR</name>
<organism>
    <name type="scientific">Ictidomys tridecemlineatus</name>
    <name type="common">Thirteen-lined ground squirrel</name>
    <name type="synonym">Spermophilus tridecemlineatus</name>
    <dbReference type="NCBI Taxonomy" id="43179"/>
    <lineage>
        <taxon>Eukaryota</taxon>
        <taxon>Metazoa</taxon>
        <taxon>Chordata</taxon>
        <taxon>Craniata</taxon>
        <taxon>Vertebrata</taxon>
        <taxon>Euteleostomi</taxon>
        <taxon>Mammalia</taxon>
        <taxon>Eutheria</taxon>
        <taxon>Euarchontoglires</taxon>
        <taxon>Glires</taxon>
        <taxon>Rodentia</taxon>
        <taxon>Sciuromorpha</taxon>
        <taxon>Sciuridae</taxon>
        <taxon>Xerinae</taxon>
        <taxon>Marmotini</taxon>
        <taxon>Ictidomys</taxon>
    </lineage>
</organism>
<protein>
    <recommendedName>
        <fullName evidence="1">ATP synthase F(0) complex subunit a</fullName>
    </recommendedName>
    <alternativeName>
        <fullName>F-ATPase protein 6</fullName>
    </alternativeName>
    <alternativeName>
        <fullName evidence="1">Proton-conducting channel, ATP synthase F(0) complex subunit a</fullName>
    </alternativeName>
</protein>
<reference key="1">
    <citation type="journal article" date="2002" name="J. Exp. Biol.">
        <title>Differential expression of mitochondria-encoded genes in a hibernating mammal.</title>
        <authorList>
            <person name="Hittel D.S."/>
            <person name="Storey K.B."/>
        </authorList>
    </citation>
    <scope>NUCLEOTIDE SEQUENCE [MRNA]</scope>
</reference>
<dbReference type="EMBL" id="AF411434">
    <property type="protein sequence ID" value="AAK97571.1"/>
    <property type="molecule type" value="mRNA"/>
</dbReference>
<dbReference type="RefSeq" id="YP_009145191.1">
    <property type="nucleotide sequence ID" value="NC_027278.1"/>
</dbReference>
<dbReference type="SMR" id="Q94UY0"/>
<dbReference type="FunCoup" id="Q94UY0">
    <property type="interactions" value="275"/>
</dbReference>
<dbReference type="STRING" id="43179.ENSSTOP00000032109"/>
<dbReference type="Ensembl" id="ENSSTOT00000040930.1">
    <property type="protein sequence ID" value="ENSSTOP00000032109.1"/>
    <property type="gene ID" value="ENSSTOG00000033906.1"/>
</dbReference>
<dbReference type="GeneID" id="24576593"/>
<dbReference type="KEGG" id="iti:24576593"/>
<dbReference type="CTD" id="4508"/>
<dbReference type="GeneTree" id="ENSGT00390000005568"/>
<dbReference type="InParanoid" id="Q94UY0"/>
<dbReference type="OrthoDB" id="5976622at2759"/>
<dbReference type="Proteomes" id="UP000005215">
    <property type="component" value="Unassembled WGS sequence"/>
</dbReference>
<dbReference type="GO" id="GO:0005743">
    <property type="term" value="C:mitochondrial inner membrane"/>
    <property type="evidence" value="ECO:0007669"/>
    <property type="project" value="UniProtKB-SubCell"/>
</dbReference>
<dbReference type="GO" id="GO:0045259">
    <property type="term" value="C:proton-transporting ATP synthase complex"/>
    <property type="evidence" value="ECO:0000250"/>
    <property type="project" value="UniProtKB"/>
</dbReference>
<dbReference type="GO" id="GO:0015252">
    <property type="term" value="F:proton channel activity"/>
    <property type="evidence" value="ECO:0000250"/>
    <property type="project" value="UniProtKB"/>
</dbReference>
<dbReference type="GO" id="GO:0046933">
    <property type="term" value="F:proton-transporting ATP synthase activity, rotational mechanism"/>
    <property type="evidence" value="ECO:0007669"/>
    <property type="project" value="Ensembl"/>
</dbReference>
<dbReference type="GO" id="GO:0015986">
    <property type="term" value="P:proton motive force-driven ATP synthesis"/>
    <property type="evidence" value="ECO:0000250"/>
    <property type="project" value="UniProtKB"/>
</dbReference>
<dbReference type="GO" id="GO:0042776">
    <property type="term" value="P:proton motive force-driven mitochondrial ATP synthesis"/>
    <property type="evidence" value="ECO:0007669"/>
    <property type="project" value="Ensembl"/>
</dbReference>
<dbReference type="GO" id="GO:1902600">
    <property type="term" value="P:proton transmembrane transport"/>
    <property type="evidence" value="ECO:0000250"/>
    <property type="project" value="UniProtKB"/>
</dbReference>
<dbReference type="CDD" id="cd00310">
    <property type="entry name" value="ATP-synt_Fo_a_6"/>
    <property type="match status" value="1"/>
</dbReference>
<dbReference type="FunFam" id="1.20.120.220:FF:000004">
    <property type="entry name" value="ATP synthase subunit a"/>
    <property type="match status" value="1"/>
</dbReference>
<dbReference type="Gene3D" id="1.20.120.220">
    <property type="entry name" value="ATP synthase, F0 complex, subunit A"/>
    <property type="match status" value="1"/>
</dbReference>
<dbReference type="InterPro" id="IPR000568">
    <property type="entry name" value="ATP_synth_F0_asu"/>
</dbReference>
<dbReference type="InterPro" id="IPR023011">
    <property type="entry name" value="ATP_synth_F0_asu_AS"/>
</dbReference>
<dbReference type="InterPro" id="IPR045083">
    <property type="entry name" value="ATP_synth_F0_asu_bact/mt"/>
</dbReference>
<dbReference type="InterPro" id="IPR035908">
    <property type="entry name" value="F0_ATP_A_sf"/>
</dbReference>
<dbReference type="NCBIfam" id="TIGR01131">
    <property type="entry name" value="ATP_synt_6_or_A"/>
    <property type="match status" value="1"/>
</dbReference>
<dbReference type="PANTHER" id="PTHR11410">
    <property type="entry name" value="ATP SYNTHASE SUBUNIT A"/>
    <property type="match status" value="1"/>
</dbReference>
<dbReference type="PANTHER" id="PTHR11410:SF0">
    <property type="entry name" value="ATP SYNTHASE SUBUNIT A"/>
    <property type="match status" value="1"/>
</dbReference>
<dbReference type="Pfam" id="PF00119">
    <property type="entry name" value="ATP-synt_A"/>
    <property type="match status" value="1"/>
</dbReference>
<dbReference type="PRINTS" id="PR00123">
    <property type="entry name" value="ATPASEA"/>
</dbReference>
<dbReference type="SUPFAM" id="SSF81336">
    <property type="entry name" value="F1F0 ATP synthase subunit A"/>
    <property type="match status" value="1"/>
</dbReference>
<dbReference type="PROSITE" id="PS00449">
    <property type="entry name" value="ATPASE_A"/>
    <property type="match status" value="1"/>
</dbReference>